<sequence length="208" mass="23359">MLSVILKESVRNLGKAGMVLKVKPGYARYLLTQKKAVRATKENLKSLEEQYLFIEKENLEKLEAAKVLKASLEDEFLIITRQAADDGKLFGSVTPKCISKLLSDKGYNIHYRNIFFYSVIKYIGEYVVNLELHPDLVLPITLYVVKNDLGAMQAQKLHAEKKRKIEEGKVEKGSCTEGESLELGSVDNDINSGNVDSNESEKQDSVSE</sequence>
<name>RL9_EHRCR</name>
<accession>Q2GHF2</accession>
<proteinExistence type="inferred from homology"/>
<reference key="1">
    <citation type="journal article" date="2006" name="PLoS Genet.">
        <title>Comparative genomics of emerging human ehrlichiosis agents.</title>
        <authorList>
            <person name="Dunning Hotopp J.C."/>
            <person name="Lin M."/>
            <person name="Madupu R."/>
            <person name="Crabtree J."/>
            <person name="Angiuoli S.V."/>
            <person name="Eisen J.A."/>
            <person name="Seshadri R."/>
            <person name="Ren Q."/>
            <person name="Wu M."/>
            <person name="Utterback T.R."/>
            <person name="Smith S."/>
            <person name="Lewis M."/>
            <person name="Khouri H."/>
            <person name="Zhang C."/>
            <person name="Niu H."/>
            <person name="Lin Q."/>
            <person name="Ohashi N."/>
            <person name="Zhi N."/>
            <person name="Nelson W.C."/>
            <person name="Brinkac L.M."/>
            <person name="Dodson R.J."/>
            <person name="Rosovitz M.J."/>
            <person name="Sundaram J.P."/>
            <person name="Daugherty S.C."/>
            <person name="Davidsen T."/>
            <person name="Durkin A.S."/>
            <person name="Gwinn M.L."/>
            <person name="Haft D.H."/>
            <person name="Selengut J.D."/>
            <person name="Sullivan S.A."/>
            <person name="Zafar N."/>
            <person name="Zhou L."/>
            <person name="Benahmed F."/>
            <person name="Forberger H."/>
            <person name="Halpin R."/>
            <person name="Mulligan S."/>
            <person name="Robinson J."/>
            <person name="White O."/>
            <person name="Rikihisa Y."/>
            <person name="Tettelin H."/>
        </authorList>
    </citation>
    <scope>NUCLEOTIDE SEQUENCE [LARGE SCALE GENOMIC DNA]</scope>
    <source>
        <strain>ATCC CRL-10679 / Arkansas</strain>
    </source>
</reference>
<dbReference type="EMBL" id="CP000236">
    <property type="protein sequence ID" value="ABD45500.1"/>
    <property type="molecule type" value="Genomic_DNA"/>
</dbReference>
<dbReference type="RefSeq" id="WP_006011335.1">
    <property type="nucleotide sequence ID" value="NC_007799.1"/>
</dbReference>
<dbReference type="SMR" id="Q2GHF2"/>
<dbReference type="STRING" id="205920.ECH_0310"/>
<dbReference type="KEGG" id="ech:ECH_0310"/>
<dbReference type="eggNOG" id="COG0359">
    <property type="taxonomic scope" value="Bacteria"/>
</dbReference>
<dbReference type="HOGENOM" id="CLU_078938_1_1_5"/>
<dbReference type="OrthoDB" id="9788336at2"/>
<dbReference type="Proteomes" id="UP000008320">
    <property type="component" value="Chromosome"/>
</dbReference>
<dbReference type="GO" id="GO:1990904">
    <property type="term" value="C:ribonucleoprotein complex"/>
    <property type="evidence" value="ECO:0007669"/>
    <property type="project" value="UniProtKB-KW"/>
</dbReference>
<dbReference type="GO" id="GO:0005840">
    <property type="term" value="C:ribosome"/>
    <property type="evidence" value="ECO:0007669"/>
    <property type="project" value="UniProtKB-KW"/>
</dbReference>
<dbReference type="GO" id="GO:0019843">
    <property type="term" value="F:rRNA binding"/>
    <property type="evidence" value="ECO:0007669"/>
    <property type="project" value="UniProtKB-UniRule"/>
</dbReference>
<dbReference type="GO" id="GO:0003735">
    <property type="term" value="F:structural constituent of ribosome"/>
    <property type="evidence" value="ECO:0007669"/>
    <property type="project" value="InterPro"/>
</dbReference>
<dbReference type="GO" id="GO:0006412">
    <property type="term" value="P:translation"/>
    <property type="evidence" value="ECO:0007669"/>
    <property type="project" value="UniProtKB-UniRule"/>
</dbReference>
<dbReference type="Gene3D" id="3.10.430.100">
    <property type="entry name" value="Ribosomal protein L9, C-terminal domain"/>
    <property type="match status" value="1"/>
</dbReference>
<dbReference type="Gene3D" id="3.40.5.10">
    <property type="entry name" value="Ribosomal protein L9, N-terminal domain"/>
    <property type="match status" value="1"/>
</dbReference>
<dbReference type="HAMAP" id="MF_00503">
    <property type="entry name" value="Ribosomal_bL9"/>
    <property type="match status" value="1"/>
</dbReference>
<dbReference type="InterPro" id="IPR000244">
    <property type="entry name" value="Ribosomal_bL9"/>
</dbReference>
<dbReference type="InterPro" id="IPR009027">
    <property type="entry name" value="Ribosomal_bL9/RNase_H1_N"/>
</dbReference>
<dbReference type="InterPro" id="IPR020594">
    <property type="entry name" value="Ribosomal_bL9_bac/chp"/>
</dbReference>
<dbReference type="InterPro" id="IPR020069">
    <property type="entry name" value="Ribosomal_bL9_C"/>
</dbReference>
<dbReference type="InterPro" id="IPR036791">
    <property type="entry name" value="Ribosomal_bL9_C_sf"/>
</dbReference>
<dbReference type="InterPro" id="IPR020070">
    <property type="entry name" value="Ribosomal_bL9_N"/>
</dbReference>
<dbReference type="InterPro" id="IPR036935">
    <property type="entry name" value="Ribosomal_bL9_N_sf"/>
</dbReference>
<dbReference type="NCBIfam" id="TIGR00158">
    <property type="entry name" value="L9"/>
    <property type="match status" value="1"/>
</dbReference>
<dbReference type="PANTHER" id="PTHR21368">
    <property type="entry name" value="50S RIBOSOMAL PROTEIN L9"/>
    <property type="match status" value="1"/>
</dbReference>
<dbReference type="Pfam" id="PF03948">
    <property type="entry name" value="Ribosomal_L9_C"/>
    <property type="match status" value="1"/>
</dbReference>
<dbReference type="Pfam" id="PF01281">
    <property type="entry name" value="Ribosomal_L9_N"/>
    <property type="match status" value="1"/>
</dbReference>
<dbReference type="SUPFAM" id="SSF55658">
    <property type="entry name" value="L9 N-domain-like"/>
    <property type="match status" value="1"/>
</dbReference>
<dbReference type="SUPFAM" id="SSF55653">
    <property type="entry name" value="Ribosomal protein L9 C-domain"/>
    <property type="match status" value="1"/>
</dbReference>
<gene>
    <name evidence="1" type="primary">rplI</name>
    <name type="ordered locus">ECH_0310</name>
</gene>
<evidence type="ECO:0000255" key="1">
    <source>
        <dbReference type="HAMAP-Rule" id="MF_00503"/>
    </source>
</evidence>
<evidence type="ECO:0000256" key="2">
    <source>
        <dbReference type="SAM" id="MobiDB-lite"/>
    </source>
</evidence>
<evidence type="ECO:0000305" key="3"/>
<keyword id="KW-1185">Reference proteome</keyword>
<keyword id="KW-0687">Ribonucleoprotein</keyword>
<keyword id="KW-0689">Ribosomal protein</keyword>
<keyword id="KW-0694">RNA-binding</keyword>
<keyword id="KW-0699">rRNA-binding</keyword>
<comment type="function">
    <text evidence="1">Binds to the 23S rRNA.</text>
</comment>
<comment type="similarity">
    <text evidence="1">Belongs to the bacterial ribosomal protein bL9 family.</text>
</comment>
<protein>
    <recommendedName>
        <fullName evidence="1">Large ribosomal subunit protein bL9</fullName>
    </recommendedName>
    <alternativeName>
        <fullName evidence="3">50S ribosomal protein L9</fullName>
    </alternativeName>
</protein>
<feature type="chain" id="PRO_0000236520" description="Large ribosomal subunit protein bL9">
    <location>
        <begin position="1"/>
        <end position="208"/>
    </location>
</feature>
<feature type="region of interest" description="Disordered" evidence="2">
    <location>
        <begin position="168"/>
        <end position="208"/>
    </location>
</feature>
<feature type="compositionally biased region" description="Polar residues" evidence="2">
    <location>
        <begin position="188"/>
        <end position="197"/>
    </location>
</feature>
<feature type="compositionally biased region" description="Basic and acidic residues" evidence="2">
    <location>
        <begin position="199"/>
        <end position="208"/>
    </location>
</feature>
<organism>
    <name type="scientific">Ehrlichia chaffeensis (strain ATCC CRL-10679 / Arkansas)</name>
    <dbReference type="NCBI Taxonomy" id="205920"/>
    <lineage>
        <taxon>Bacteria</taxon>
        <taxon>Pseudomonadati</taxon>
        <taxon>Pseudomonadota</taxon>
        <taxon>Alphaproteobacteria</taxon>
        <taxon>Rickettsiales</taxon>
        <taxon>Anaplasmataceae</taxon>
        <taxon>Ehrlichia</taxon>
    </lineage>
</organism>